<gene>
    <name type="primary">REXO1L1</name>
    <name type="synonym">GOR</name>
</gene>
<proteinExistence type="evidence at transcript level"/>
<dbReference type="EC" id="3.1.-.-"/>
<dbReference type="EMBL" id="D10017">
    <property type="protein sequence ID" value="BAA00906.1"/>
    <property type="status" value="ALT_SEQ"/>
    <property type="molecule type" value="Genomic_DNA"/>
</dbReference>
<dbReference type="EMBL" id="S78897">
    <property type="protein sequence ID" value="AAB21194.1"/>
    <property type="status" value="ALT_SEQ"/>
    <property type="molecule type" value="mRNA"/>
</dbReference>
<dbReference type="PIR" id="A37238">
    <property type="entry name" value="A37238"/>
</dbReference>
<dbReference type="SMR" id="P48778"/>
<dbReference type="FunCoup" id="P48778">
    <property type="interactions" value="11"/>
</dbReference>
<dbReference type="STRING" id="9598.ENSPTRP00000077585"/>
<dbReference type="InParanoid" id="P48778"/>
<dbReference type="Proteomes" id="UP000002277">
    <property type="component" value="Unplaced"/>
</dbReference>
<dbReference type="GO" id="GO:0005737">
    <property type="term" value="C:cytoplasm"/>
    <property type="evidence" value="ECO:0007669"/>
    <property type="project" value="UniProtKB-SubCell"/>
</dbReference>
<dbReference type="GO" id="GO:0005634">
    <property type="term" value="C:nucleus"/>
    <property type="evidence" value="ECO:0000318"/>
    <property type="project" value="GO_Central"/>
</dbReference>
<dbReference type="GO" id="GO:0004527">
    <property type="term" value="F:exonuclease activity"/>
    <property type="evidence" value="ECO:0000318"/>
    <property type="project" value="GO_Central"/>
</dbReference>
<dbReference type="GO" id="GO:0003676">
    <property type="term" value="F:nucleic acid binding"/>
    <property type="evidence" value="ECO:0007669"/>
    <property type="project" value="InterPro"/>
</dbReference>
<dbReference type="GO" id="GO:0031125">
    <property type="term" value="P:rRNA 3'-end processing"/>
    <property type="evidence" value="ECO:0000318"/>
    <property type="project" value="GO_Central"/>
</dbReference>
<dbReference type="CDD" id="cd06145">
    <property type="entry name" value="REX1_like"/>
    <property type="match status" value="1"/>
</dbReference>
<dbReference type="FunFam" id="3.30.420.10:FF:000021">
    <property type="entry name" value="RNA exonuclease 1 homolog"/>
    <property type="match status" value="1"/>
</dbReference>
<dbReference type="Gene3D" id="3.30.420.10">
    <property type="entry name" value="Ribonuclease H-like superfamily/Ribonuclease H"/>
    <property type="match status" value="1"/>
</dbReference>
<dbReference type="InterPro" id="IPR013520">
    <property type="entry name" value="Exonuclease_RNaseT/DNA_pol3"/>
</dbReference>
<dbReference type="InterPro" id="IPR034922">
    <property type="entry name" value="REX1-like_exo"/>
</dbReference>
<dbReference type="InterPro" id="IPR031736">
    <property type="entry name" value="REXO1-like_dom"/>
</dbReference>
<dbReference type="InterPro" id="IPR047021">
    <property type="entry name" value="REXO1/3/4-like"/>
</dbReference>
<dbReference type="InterPro" id="IPR012337">
    <property type="entry name" value="RNaseH-like_sf"/>
</dbReference>
<dbReference type="InterPro" id="IPR036397">
    <property type="entry name" value="RNaseH_sf"/>
</dbReference>
<dbReference type="PANTHER" id="PTHR12801:SF22">
    <property type="entry name" value="EXONUCLEASE GOR-RELATED"/>
    <property type="match status" value="1"/>
</dbReference>
<dbReference type="PANTHER" id="PTHR12801">
    <property type="entry name" value="RNA EXONUCLEASE REXO1 / RECO3 FAMILY MEMBER-RELATED"/>
    <property type="match status" value="1"/>
</dbReference>
<dbReference type="Pfam" id="PF15870">
    <property type="entry name" value="EloA-BP1"/>
    <property type="match status" value="2"/>
</dbReference>
<dbReference type="SMART" id="SM00479">
    <property type="entry name" value="EXOIII"/>
    <property type="match status" value="1"/>
</dbReference>
<dbReference type="SUPFAM" id="SSF53098">
    <property type="entry name" value="Ribonuclease H-like"/>
    <property type="match status" value="1"/>
</dbReference>
<comment type="subcellular location">
    <subcellularLocation>
        <location>Cytoplasm</location>
    </subcellularLocation>
    <subcellularLocation>
        <location evidence="1">Nucleus</location>
    </subcellularLocation>
</comment>
<comment type="miscellaneous">
    <text>May encode GOR14-1, a host antigenic epitope specifically expressed in response to non-A non-B hepatitis virus infection.</text>
</comment>
<comment type="similarity">
    <text evidence="3">Belongs to the REXO1/REXO3 family.</text>
</comment>
<comment type="sequence caution" evidence="3">
    <conflict type="erroneous initiation">
        <sequence resource="EMBL-CDS" id="AAB21194"/>
    </conflict>
    <text>Truncated N-terminus.</text>
</comment>
<comment type="sequence caution" evidence="3">
    <conflict type="miscellaneous discrepancy">
        <sequence resource="EMBL-CDS" id="AAB21194"/>
    </conflict>
    <text>Contaminating sequence. Sequence of unknown origin in the N-terminal part.</text>
</comment>
<comment type="sequence caution" evidence="3">
    <conflict type="miscellaneous discrepancy">
        <sequence resource="EMBL-CDS" id="BAA00906"/>
    </conflict>
    <text>Contaminating sequence. Sequence of unknown origin in the N-terminal part.</text>
</comment>
<protein>
    <recommendedName>
        <fullName>Exonuclease GOR</fullName>
        <ecNumber>3.1.-.-</ecNumber>
    </recommendedName>
    <alternativeName>
        <fullName>Antigen GOR</fullName>
    </alternativeName>
    <alternativeName>
        <fullName>RNA exonuclease 1 homolog-like</fullName>
    </alternativeName>
</protein>
<keyword id="KW-0963">Cytoplasm</keyword>
<keyword id="KW-0269">Exonuclease</keyword>
<keyword id="KW-0378">Hydrolase</keyword>
<keyword id="KW-0540">Nuclease</keyword>
<keyword id="KW-0539">Nucleus</keyword>
<keyword id="KW-1185">Reference proteome</keyword>
<organism>
    <name type="scientific">Pan troglodytes</name>
    <name type="common">Chimpanzee</name>
    <dbReference type="NCBI Taxonomy" id="9598"/>
    <lineage>
        <taxon>Eukaryota</taxon>
        <taxon>Metazoa</taxon>
        <taxon>Chordata</taxon>
        <taxon>Craniata</taxon>
        <taxon>Vertebrata</taxon>
        <taxon>Euteleostomi</taxon>
        <taxon>Mammalia</taxon>
        <taxon>Eutheria</taxon>
        <taxon>Euarchontoglires</taxon>
        <taxon>Primates</taxon>
        <taxon>Haplorrhini</taxon>
        <taxon>Catarrhini</taxon>
        <taxon>Hominidae</taxon>
        <taxon>Pan</taxon>
    </lineage>
</organism>
<sequence length="690" mass="75361">MLRATAPCWFPPGYPEAKKVAEEAALEAPEFPLPSHQPAQSFGLPVPQMHNQASAFVDIQAEPQNRGPAVHPAWPKMVTEACYFPAQRGSACCLPAAPRLTERPSGVRISAPRKRKTIAQSSSPCLVTGCTDAKRTRVASSSQRSSGSKVGRQPGKTRNRSGMACKTTTTISSKRIVRRPSLPSLKKPIILRRSGCQVPTVLRRGYLQLFTEECLKFCASKQEAEEKALNEEKVAYDCSPNKNRYLNVVLNTLKRLKGLTPSSMPGLSRAALYSRLQEFLLSQDQLKENGYPFPHPERPGGAVLFTGQGKGPGDSSCRVCCRCGTEYLVSSSGRCVRDQLCYYHWGRVRSSQVAGGRVSQYTCCAAAPGSVGCQVAKQHVRDGRKDSLDGFVETFKKELSRDAYPGIYALDCEMCYTTHGLELTRVTVVDADMRVVYDTFVKPDNEIVDYNTRFSGVTEADVAKTSITLPQVQAILLSFFSAQTILIGHSLESDLLALKLIHSTVLDTAVLFPHYLGFPYKRSLRNLAADYLGQIIQDSQDGHNSSEDANACLQLVMWKVRQRAQIQPRHRSASPAALACPWPQAPSTTAISPESSPCPPRRKAKETGAVDGRRGQKAKSNPNRPLPVPRNPCRGPSGLSPSLCPSQTSVLPLIASRSTEPPLPVPRVPAAPPRACPHPSAHPRPLSLHH</sequence>
<evidence type="ECO:0000250" key="1"/>
<evidence type="ECO:0000256" key="2">
    <source>
        <dbReference type="SAM" id="MobiDB-lite"/>
    </source>
</evidence>
<evidence type="ECO:0000305" key="3"/>
<feature type="chain" id="PRO_0000120939" description="Exonuclease GOR">
    <location>
        <begin position="1"/>
        <end position="690"/>
    </location>
</feature>
<feature type="region of interest" description="Disordered" evidence="2">
    <location>
        <begin position="136"/>
        <end position="162"/>
    </location>
</feature>
<feature type="region of interest" description="Disordered" evidence="2">
    <location>
        <begin position="567"/>
        <end position="690"/>
    </location>
</feature>
<feature type="region of interest" description="GOR14-1 epitope">
    <location>
        <begin position="612"/>
        <end position="626"/>
    </location>
</feature>
<feature type="compositionally biased region" description="Polar residues" evidence="2">
    <location>
        <begin position="585"/>
        <end position="595"/>
    </location>
</feature>
<feature type="compositionally biased region" description="Basic and acidic residues" evidence="2">
    <location>
        <begin position="605"/>
        <end position="614"/>
    </location>
</feature>
<feature type="compositionally biased region" description="Low complexity" evidence="2">
    <location>
        <begin position="631"/>
        <end position="646"/>
    </location>
</feature>
<feature type="compositionally biased region" description="Pro residues" evidence="2">
    <location>
        <begin position="661"/>
        <end position="682"/>
    </location>
</feature>
<accession>P48778</accession>
<accession>Q28909</accession>
<name>GOR_PANTR</name>
<reference key="1">
    <citation type="journal article" date="2005" name="Nature">
        <title>Initial sequence of the chimpanzee genome and comparison with the human genome.</title>
        <authorList>
            <consortium name="Chimpanzee sequencing and analysis consortium"/>
        </authorList>
    </citation>
    <scope>NUCLEOTIDE SEQUENCE [LARGE SCALE GENOMIC DNA]</scope>
</reference>
<reference key="2">
    <citation type="journal article" date="1991" name="Autoimmunity">
        <title>An autoantibody cross-reactive to hepatitis C virus core and a host nuclear antigen.</title>
        <authorList>
            <person name="Mishiro S."/>
            <person name="Takeda K."/>
            <person name="Hoshi Y."/>
            <person name="Yoshikawa A."/>
            <person name="Gotanda T."/>
            <person name="Itoh Y."/>
        </authorList>
    </citation>
    <scope>NUCLEOTIDE SEQUENCE [GENOMIC DNA] OF 169-690</scope>
</reference>
<reference key="3">
    <citation type="journal article" date="1990" name="Lancet">
        <title>Non-A, non-B hepatitis specific antibodies directed at host-derived epitope: implication for an autoimmune process.</title>
        <authorList>
            <person name="Mishiro S."/>
            <person name="Hoshi Y."/>
            <person name="Takeda K."/>
            <person name="Yoshikawa A."/>
            <person name="Gotanda T."/>
            <person name="Takahashi K."/>
            <person name="Akahane Y."/>
            <person name="Yoshizawa H."/>
            <person name="Okamoto H."/>
            <person name="Tsuda F."/>
            <person name="Peterson D.A."/>
            <person name="Muchmore E."/>
        </authorList>
    </citation>
    <scope>NUCLEOTIDE SEQUENCE [MRNA] OF 598-652</scope>
</reference>
<reference key="4">
    <citation type="journal article" date="1990" name="Lancet">
        <authorList>
            <person name="Mishiro S."/>
            <person name="Hoshi Y."/>
            <person name="Takeda K."/>
            <person name="Yoshikawa A."/>
            <person name="Gotanda T."/>
            <person name="Takahashi K."/>
            <person name="Akahane Y."/>
            <person name="Yoshizawa H."/>
            <person name="Okamoto H."/>
            <person name="Tsuda F."/>
            <person name="Peterson D.A."/>
            <person name="Muchmore E."/>
        </authorList>
    </citation>
    <scope>ERRATUM OF PUBMED:1701012</scope>
</reference>